<gene>
    <name type="primary">Taf9b</name>
    <name type="synonym">Taf9l</name>
</gene>
<evidence type="ECO:0000250" key="1"/>
<evidence type="ECO:0000250" key="2">
    <source>
        <dbReference type="UniProtKB" id="Q9HBM6"/>
    </source>
</evidence>
<evidence type="ECO:0000255" key="3"/>
<evidence type="ECO:0000256" key="4">
    <source>
        <dbReference type="SAM" id="MobiDB-lite"/>
    </source>
</evidence>
<evidence type="ECO:0000305" key="5"/>
<evidence type="ECO:0000312" key="6">
    <source>
        <dbReference type="EMBL" id="AAH51635.1"/>
    </source>
</evidence>
<evidence type="ECO:0000312" key="7">
    <source>
        <dbReference type="EMBL" id="AAH66223.1"/>
    </source>
</evidence>
<evidence type="ECO:0000312" key="8">
    <source>
        <dbReference type="EMBL" id="BAE20773.1"/>
    </source>
</evidence>
<evidence type="ECO:0000312" key="9">
    <source>
        <dbReference type="EMBL" id="BAE22420.1"/>
    </source>
</evidence>
<comment type="function">
    <text evidence="1">Essential for cell viability. TAF9 and TAF9B are involved in transcriptional activation as well as repression of distinct but overlapping sets of genes. May have a role in gene regulation associated with apoptosis. TAFs are components of the transcription factor IID (TFIID) complex, the TBP-free TAFII complex (TFTC), the PCAF histone acetylase complex and the STAGA transcription coactivator-HAT complex. TFIID or TFTC are essential for the regulation of RNA polymerase II-mediated transcription (By similarity).</text>
</comment>
<comment type="subunit">
    <text evidence="1">Binds TAF5 and TAF6. Component of TFIID and the TATA-binding protein-free TAF complex (TFTC). TFIID is composed of TATA binding protein (TBP) and a number of TBP-associated factors (TAFs). Binds N-terminal domain of p53/TP53 which is essential for transcription (By similarity).</text>
</comment>
<comment type="subcellular location">
    <subcellularLocation>
        <location evidence="1">Nucleus</location>
    </subcellularLocation>
</comment>
<comment type="similarity">
    <text evidence="3">Belongs to the TAF9 family.</text>
</comment>
<comment type="sequence caution" evidence="5">
    <conflict type="erroneous initiation">
        <sequence resource="EMBL-CDS" id="AAH51635"/>
    </conflict>
</comment>
<comment type="sequence caution" evidence="5">
    <conflict type="erroneous initiation">
        <sequence resource="EMBL-CDS" id="BAE20773"/>
    </conflict>
</comment>
<accession>Q6NZA9</accession>
<accession>A2AP80</accession>
<accession>Q3UXZ3</accession>
<accession>Q3V2M4</accession>
<accession>Q80WW6</accession>
<proteinExistence type="evidence at protein level"/>
<dbReference type="EMBL" id="AK131710">
    <property type="protein sequence ID" value="BAE20773.1"/>
    <property type="status" value="ALT_INIT"/>
    <property type="molecule type" value="mRNA"/>
</dbReference>
<dbReference type="EMBL" id="AK135097">
    <property type="protein sequence ID" value="BAE22420.1"/>
    <property type="molecule type" value="mRNA"/>
</dbReference>
<dbReference type="EMBL" id="AL833778">
    <property type="status" value="NOT_ANNOTATED_CDS"/>
    <property type="molecule type" value="Genomic_DNA"/>
</dbReference>
<dbReference type="EMBL" id="BC051635">
    <property type="protein sequence ID" value="AAH51635.1"/>
    <property type="status" value="ALT_INIT"/>
    <property type="molecule type" value="mRNA"/>
</dbReference>
<dbReference type="EMBL" id="BC066223">
    <property type="protein sequence ID" value="AAH66223.1"/>
    <property type="molecule type" value="mRNA"/>
</dbReference>
<dbReference type="CCDS" id="CCDS30340.1"/>
<dbReference type="RefSeq" id="NP_001001176.2">
    <property type="nucleotide sequence ID" value="NM_001001176.2"/>
</dbReference>
<dbReference type="RefSeq" id="NP_001161460.1">
    <property type="nucleotide sequence ID" value="NM_001167988.1"/>
</dbReference>
<dbReference type="SMR" id="Q6NZA9"/>
<dbReference type="FunCoup" id="Q6NZA9">
    <property type="interactions" value="282"/>
</dbReference>
<dbReference type="STRING" id="10090.ENSMUSP00000109123"/>
<dbReference type="GlyGen" id="Q6NZA9">
    <property type="glycosylation" value="3 sites, 1 O-linked glycan (2 sites)"/>
</dbReference>
<dbReference type="iPTMnet" id="Q6NZA9"/>
<dbReference type="PhosphoSitePlus" id="Q6NZA9"/>
<dbReference type="jPOST" id="Q6NZA9"/>
<dbReference type="PaxDb" id="10090-ENSMUSP00000109123"/>
<dbReference type="ProteomicsDB" id="263249"/>
<dbReference type="Antibodypedia" id="28250">
    <property type="antibodies" value="135 antibodies from 24 providers"/>
</dbReference>
<dbReference type="DNASU" id="407786"/>
<dbReference type="Ensembl" id="ENSMUST00000055497.15">
    <property type="protein sequence ID" value="ENSMUSP00000059751.9"/>
    <property type="gene ID" value="ENSMUSG00000047242.15"/>
</dbReference>
<dbReference type="GeneID" id="407786"/>
<dbReference type="KEGG" id="mmu:407786"/>
<dbReference type="UCSC" id="uc009ubq.2">
    <property type="organism name" value="mouse"/>
</dbReference>
<dbReference type="AGR" id="MGI:3039562"/>
<dbReference type="CTD" id="51616"/>
<dbReference type="MGI" id="MGI:3039562">
    <property type="gene designation" value="Taf9b"/>
</dbReference>
<dbReference type="VEuPathDB" id="HostDB:ENSMUSG00000047242"/>
<dbReference type="eggNOG" id="KOG3334">
    <property type="taxonomic scope" value="Eukaryota"/>
</dbReference>
<dbReference type="GeneTree" id="ENSGT00940000161697"/>
<dbReference type="HOGENOM" id="CLU_068315_2_0_1"/>
<dbReference type="InParanoid" id="Q6NZA9"/>
<dbReference type="OMA" id="DDNDTMI"/>
<dbReference type="OrthoDB" id="341924at2759"/>
<dbReference type="PhylomeDB" id="Q6NZA9"/>
<dbReference type="Reactome" id="R-MMU-5689880">
    <property type="pathway name" value="Ub-specific processing proteases"/>
</dbReference>
<dbReference type="Reactome" id="R-MMU-674695">
    <property type="pathway name" value="RNA Polymerase II Pre-transcription Events"/>
</dbReference>
<dbReference type="Reactome" id="R-MMU-6804756">
    <property type="pathway name" value="Regulation of TP53 Activity through Phosphorylation"/>
</dbReference>
<dbReference type="Reactome" id="R-MMU-73776">
    <property type="pathway name" value="RNA Polymerase II Promoter Escape"/>
</dbReference>
<dbReference type="Reactome" id="R-MMU-73779">
    <property type="pathway name" value="RNA Polymerase II Transcription Pre-Initiation And Promoter Opening"/>
</dbReference>
<dbReference type="Reactome" id="R-MMU-75953">
    <property type="pathway name" value="RNA Polymerase II Transcription Initiation"/>
</dbReference>
<dbReference type="Reactome" id="R-MMU-76042">
    <property type="pathway name" value="RNA Polymerase II Transcription Initiation And Promoter Clearance"/>
</dbReference>
<dbReference type="BioGRID-ORCS" id="407786">
    <property type="hits" value="4 hits in 76 CRISPR screens"/>
</dbReference>
<dbReference type="PRO" id="PR:Q6NZA9"/>
<dbReference type="Proteomes" id="UP000000589">
    <property type="component" value="Chromosome X"/>
</dbReference>
<dbReference type="RNAct" id="Q6NZA9">
    <property type="molecule type" value="protein"/>
</dbReference>
<dbReference type="Bgee" id="ENSMUSG00000047242">
    <property type="expression patterns" value="Expressed in animal zygote and 216 other cell types or tissues"/>
</dbReference>
<dbReference type="ExpressionAtlas" id="Q6NZA9">
    <property type="expression patterns" value="baseline and differential"/>
</dbReference>
<dbReference type="GO" id="GO:0005669">
    <property type="term" value="C:transcription factor TFIID complex"/>
    <property type="evidence" value="ECO:0007669"/>
    <property type="project" value="Ensembl"/>
</dbReference>
<dbReference type="GO" id="GO:0033276">
    <property type="term" value="C:transcription factor TFTC complex"/>
    <property type="evidence" value="ECO:0007669"/>
    <property type="project" value="Ensembl"/>
</dbReference>
<dbReference type="GO" id="GO:0046982">
    <property type="term" value="F:protein heterodimerization activity"/>
    <property type="evidence" value="ECO:0007669"/>
    <property type="project" value="InterPro"/>
</dbReference>
<dbReference type="GO" id="GO:0006352">
    <property type="term" value="P:DNA-templated transcription initiation"/>
    <property type="evidence" value="ECO:0007669"/>
    <property type="project" value="InterPro"/>
</dbReference>
<dbReference type="GO" id="GO:0043066">
    <property type="term" value="P:negative regulation of apoptotic process"/>
    <property type="evidence" value="ECO:0007669"/>
    <property type="project" value="Ensembl"/>
</dbReference>
<dbReference type="GO" id="GO:0000122">
    <property type="term" value="P:negative regulation of transcription by RNA polymerase II"/>
    <property type="evidence" value="ECO:0007669"/>
    <property type="project" value="Ensembl"/>
</dbReference>
<dbReference type="GO" id="GO:0030307">
    <property type="term" value="P:positive regulation of cell growth"/>
    <property type="evidence" value="ECO:0007669"/>
    <property type="project" value="Ensembl"/>
</dbReference>
<dbReference type="GO" id="GO:0050821">
    <property type="term" value="P:protein stabilization"/>
    <property type="evidence" value="ECO:0007669"/>
    <property type="project" value="Ensembl"/>
</dbReference>
<dbReference type="CDD" id="cd07979">
    <property type="entry name" value="HFD_TAF9"/>
    <property type="match status" value="1"/>
</dbReference>
<dbReference type="FunFam" id="1.10.20.10:FF:000018">
    <property type="entry name" value="Transcription initiation factor TFIID subunit 9"/>
    <property type="match status" value="1"/>
</dbReference>
<dbReference type="Gene3D" id="1.10.20.10">
    <property type="entry name" value="Histone, subunit A"/>
    <property type="match status" value="1"/>
</dbReference>
<dbReference type="InterPro" id="IPR009072">
    <property type="entry name" value="Histone-fold"/>
</dbReference>
<dbReference type="InterPro" id="IPR003162">
    <property type="entry name" value="TFIID-31"/>
</dbReference>
<dbReference type="InterPro" id="IPR051431">
    <property type="entry name" value="TFIID_subunit_9"/>
</dbReference>
<dbReference type="PANTHER" id="PTHR48068">
    <property type="entry name" value="TAF9 RNA POLYMERASE II, TATA BOX-BINDING PROTEIN (TBP)-ASSOCIATED FACTOR"/>
    <property type="match status" value="1"/>
</dbReference>
<dbReference type="PANTHER" id="PTHR48068:SF5">
    <property type="entry name" value="TRANSCRIPTION INITIATION FACTOR TFIID SUBUNIT 9B"/>
    <property type="match status" value="1"/>
</dbReference>
<dbReference type="Pfam" id="PF02291">
    <property type="entry name" value="TFIID-31kDa"/>
    <property type="match status" value="1"/>
</dbReference>
<dbReference type="SUPFAM" id="SSF47113">
    <property type="entry name" value="Histone-fold"/>
    <property type="match status" value="1"/>
</dbReference>
<reference evidence="9" key="1">
    <citation type="journal article" date="2005" name="Science">
        <title>The transcriptional landscape of the mammalian genome.</title>
        <authorList>
            <person name="Carninci P."/>
            <person name="Kasukawa T."/>
            <person name="Katayama S."/>
            <person name="Gough J."/>
            <person name="Frith M.C."/>
            <person name="Maeda N."/>
            <person name="Oyama R."/>
            <person name="Ravasi T."/>
            <person name="Lenhard B."/>
            <person name="Wells C."/>
            <person name="Kodzius R."/>
            <person name="Shimokawa K."/>
            <person name="Bajic V.B."/>
            <person name="Brenner S.E."/>
            <person name="Batalov S."/>
            <person name="Forrest A.R."/>
            <person name="Zavolan M."/>
            <person name="Davis M.J."/>
            <person name="Wilming L.G."/>
            <person name="Aidinis V."/>
            <person name="Allen J.E."/>
            <person name="Ambesi-Impiombato A."/>
            <person name="Apweiler R."/>
            <person name="Aturaliya R.N."/>
            <person name="Bailey T.L."/>
            <person name="Bansal M."/>
            <person name="Baxter L."/>
            <person name="Beisel K.W."/>
            <person name="Bersano T."/>
            <person name="Bono H."/>
            <person name="Chalk A.M."/>
            <person name="Chiu K.P."/>
            <person name="Choudhary V."/>
            <person name="Christoffels A."/>
            <person name="Clutterbuck D.R."/>
            <person name="Crowe M.L."/>
            <person name="Dalla E."/>
            <person name="Dalrymple B.P."/>
            <person name="de Bono B."/>
            <person name="Della Gatta G."/>
            <person name="di Bernardo D."/>
            <person name="Down T."/>
            <person name="Engstrom P."/>
            <person name="Fagiolini M."/>
            <person name="Faulkner G."/>
            <person name="Fletcher C.F."/>
            <person name="Fukushima T."/>
            <person name="Furuno M."/>
            <person name="Futaki S."/>
            <person name="Gariboldi M."/>
            <person name="Georgii-Hemming P."/>
            <person name="Gingeras T.R."/>
            <person name="Gojobori T."/>
            <person name="Green R.E."/>
            <person name="Gustincich S."/>
            <person name="Harbers M."/>
            <person name="Hayashi Y."/>
            <person name="Hensch T.K."/>
            <person name="Hirokawa N."/>
            <person name="Hill D."/>
            <person name="Huminiecki L."/>
            <person name="Iacono M."/>
            <person name="Ikeo K."/>
            <person name="Iwama A."/>
            <person name="Ishikawa T."/>
            <person name="Jakt M."/>
            <person name="Kanapin A."/>
            <person name="Katoh M."/>
            <person name="Kawasawa Y."/>
            <person name="Kelso J."/>
            <person name="Kitamura H."/>
            <person name="Kitano H."/>
            <person name="Kollias G."/>
            <person name="Krishnan S.P."/>
            <person name="Kruger A."/>
            <person name="Kummerfeld S.K."/>
            <person name="Kurochkin I.V."/>
            <person name="Lareau L.F."/>
            <person name="Lazarevic D."/>
            <person name="Lipovich L."/>
            <person name="Liu J."/>
            <person name="Liuni S."/>
            <person name="McWilliam S."/>
            <person name="Madan Babu M."/>
            <person name="Madera M."/>
            <person name="Marchionni L."/>
            <person name="Matsuda H."/>
            <person name="Matsuzawa S."/>
            <person name="Miki H."/>
            <person name="Mignone F."/>
            <person name="Miyake S."/>
            <person name="Morris K."/>
            <person name="Mottagui-Tabar S."/>
            <person name="Mulder N."/>
            <person name="Nakano N."/>
            <person name="Nakauchi H."/>
            <person name="Ng P."/>
            <person name="Nilsson R."/>
            <person name="Nishiguchi S."/>
            <person name="Nishikawa S."/>
            <person name="Nori F."/>
            <person name="Ohara O."/>
            <person name="Okazaki Y."/>
            <person name="Orlando V."/>
            <person name="Pang K.C."/>
            <person name="Pavan W.J."/>
            <person name="Pavesi G."/>
            <person name="Pesole G."/>
            <person name="Petrovsky N."/>
            <person name="Piazza S."/>
            <person name="Reed J."/>
            <person name="Reid J.F."/>
            <person name="Ring B.Z."/>
            <person name="Ringwald M."/>
            <person name="Rost B."/>
            <person name="Ruan Y."/>
            <person name="Salzberg S.L."/>
            <person name="Sandelin A."/>
            <person name="Schneider C."/>
            <person name="Schoenbach C."/>
            <person name="Sekiguchi K."/>
            <person name="Semple C.A."/>
            <person name="Seno S."/>
            <person name="Sessa L."/>
            <person name="Sheng Y."/>
            <person name="Shibata Y."/>
            <person name="Shimada H."/>
            <person name="Shimada K."/>
            <person name="Silva D."/>
            <person name="Sinclair B."/>
            <person name="Sperling S."/>
            <person name="Stupka E."/>
            <person name="Sugiura K."/>
            <person name="Sultana R."/>
            <person name="Takenaka Y."/>
            <person name="Taki K."/>
            <person name="Tammoja K."/>
            <person name="Tan S.L."/>
            <person name="Tang S."/>
            <person name="Taylor M.S."/>
            <person name="Tegner J."/>
            <person name="Teichmann S.A."/>
            <person name="Ueda H.R."/>
            <person name="van Nimwegen E."/>
            <person name="Verardo R."/>
            <person name="Wei C.L."/>
            <person name="Yagi K."/>
            <person name="Yamanishi H."/>
            <person name="Zabarovsky E."/>
            <person name="Zhu S."/>
            <person name="Zimmer A."/>
            <person name="Hide W."/>
            <person name="Bult C."/>
            <person name="Grimmond S.M."/>
            <person name="Teasdale R.D."/>
            <person name="Liu E.T."/>
            <person name="Brusic V."/>
            <person name="Quackenbush J."/>
            <person name="Wahlestedt C."/>
            <person name="Mattick J.S."/>
            <person name="Hume D.A."/>
            <person name="Kai C."/>
            <person name="Sasaki D."/>
            <person name="Tomaru Y."/>
            <person name="Fukuda S."/>
            <person name="Kanamori-Katayama M."/>
            <person name="Suzuki M."/>
            <person name="Aoki J."/>
            <person name="Arakawa T."/>
            <person name="Iida J."/>
            <person name="Imamura K."/>
            <person name="Itoh M."/>
            <person name="Kato T."/>
            <person name="Kawaji H."/>
            <person name="Kawagashira N."/>
            <person name="Kawashima T."/>
            <person name="Kojima M."/>
            <person name="Kondo S."/>
            <person name="Konno H."/>
            <person name="Nakano K."/>
            <person name="Ninomiya N."/>
            <person name="Nishio T."/>
            <person name="Okada M."/>
            <person name="Plessy C."/>
            <person name="Shibata K."/>
            <person name="Shiraki T."/>
            <person name="Suzuki S."/>
            <person name="Tagami M."/>
            <person name="Waki K."/>
            <person name="Watahiki A."/>
            <person name="Okamura-Oho Y."/>
            <person name="Suzuki H."/>
            <person name="Kawai J."/>
            <person name="Hayashizaki Y."/>
        </authorList>
    </citation>
    <scope>NUCLEOTIDE SEQUENCE [LARGE SCALE MRNA]</scope>
    <source>
        <strain evidence="9">C57BL/6J</strain>
        <tissue evidence="9">Olfactory bulb</tissue>
        <tissue evidence="8">Testis</tissue>
    </source>
</reference>
<reference key="2">
    <citation type="journal article" date="2009" name="PLoS Biol.">
        <title>Lineage-specific biology revealed by a finished genome assembly of the mouse.</title>
        <authorList>
            <person name="Church D.M."/>
            <person name="Goodstadt L."/>
            <person name="Hillier L.W."/>
            <person name="Zody M.C."/>
            <person name="Goldstein S."/>
            <person name="She X."/>
            <person name="Bult C.J."/>
            <person name="Agarwala R."/>
            <person name="Cherry J.L."/>
            <person name="DiCuccio M."/>
            <person name="Hlavina W."/>
            <person name="Kapustin Y."/>
            <person name="Meric P."/>
            <person name="Maglott D."/>
            <person name="Birtle Z."/>
            <person name="Marques A.C."/>
            <person name="Graves T."/>
            <person name="Zhou S."/>
            <person name="Teague B."/>
            <person name="Potamousis K."/>
            <person name="Churas C."/>
            <person name="Place M."/>
            <person name="Herschleb J."/>
            <person name="Runnheim R."/>
            <person name="Forrest D."/>
            <person name="Amos-Landgraf J."/>
            <person name="Schwartz D.C."/>
            <person name="Cheng Z."/>
            <person name="Lindblad-Toh K."/>
            <person name="Eichler E.E."/>
            <person name="Ponting C.P."/>
        </authorList>
    </citation>
    <scope>NUCLEOTIDE SEQUENCE [LARGE SCALE GENOMIC DNA]</scope>
    <source>
        <strain>C57BL/6J</strain>
    </source>
</reference>
<reference evidence="7" key="3">
    <citation type="journal article" date="2004" name="Genome Res.">
        <title>The status, quality, and expansion of the NIH full-length cDNA project: the Mammalian Gene Collection (MGC).</title>
        <authorList>
            <consortium name="The MGC Project Team"/>
        </authorList>
    </citation>
    <scope>NUCLEOTIDE SEQUENCE [LARGE SCALE MRNA]</scope>
    <source>
        <strain evidence="6 7">C57BL/6J</strain>
        <tissue evidence="6">Embryo</tissue>
        <tissue evidence="7">Kidney</tissue>
    </source>
</reference>
<reference key="4">
    <citation type="journal article" date="2007" name="Proc. Natl. Acad. Sci. U.S.A.">
        <title>Large-scale phosphorylation analysis of mouse liver.</title>
        <authorList>
            <person name="Villen J."/>
            <person name="Beausoleil S.A."/>
            <person name="Gerber S.A."/>
            <person name="Gygi S.P."/>
        </authorList>
    </citation>
    <scope>IDENTIFICATION BY MASS SPECTROMETRY [LARGE SCALE ANALYSIS]</scope>
    <source>
        <tissue>Liver</tissue>
    </source>
</reference>
<reference key="5">
    <citation type="journal article" date="2010" name="Cell">
        <title>A tissue-specific atlas of mouse protein phosphorylation and expression.</title>
        <authorList>
            <person name="Huttlin E.L."/>
            <person name="Jedrychowski M.P."/>
            <person name="Elias J.E."/>
            <person name="Goswami T."/>
            <person name="Rad R."/>
            <person name="Beausoleil S.A."/>
            <person name="Villen J."/>
            <person name="Haas W."/>
            <person name="Sowa M.E."/>
            <person name="Gygi S.P."/>
        </authorList>
    </citation>
    <scope>IDENTIFICATION BY MASS SPECTROMETRY [LARGE SCALE ANALYSIS]</scope>
    <source>
        <tissue>Brain</tissue>
        <tissue>Brown adipose tissue</tissue>
        <tissue>Heart</tissue>
        <tissue>Kidney</tissue>
        <tissue>Liver</tissue>
        <tissue>Lung</tissue>
        <tissue>Spleen</tissue>
        <tissue>Testis</tissue>
    </source>
</reference>
<protein>
    <recommendedName>
        <fullName>Transcription initiation factor TFIID subunit 9B</fullName>
    </recommendedName>
    <alternativeName>
        <fullName>Transcription initiation factor TFIID subunit 9-like</fullName>
    </alternativeName>
    <alternativeName>
        <fullName>Transcription-associated factor TAFII31L</fullName>
    </alternativeName>
</protein>
<name>TAF9B_MOUSE</name>
<sequence length="249" mass="27172">MEPAKMAPIKNAPRDALVMAQILKDMGITEYEPRVINQMLEFAFRYVTTILDDAKIYSSHAKKPTVDADDVRLAIQCRADQSFTSPPPRDFLLDIARQKNQTPLPLIKPYAGPRLPPDRYCLTAPNYRLKSLVKKGPNQGRLVPRLSAVSSRPTTPPVAPPQAVSGPNKAATPVSVTSQRFAVQIPPSQSTPAKPAPAATAVQNVLINPSMIGPKNILITTSMVSSQNTATDSNPLKRKHDDDDDNDTM</sequence>
<feature type="chain" id="PRO_0000118892" description="Transcription initiation factor TFIID subunit 9B">
    <location>
        <begin position="1"/>
        <end position="249"/>
    </location>
</feature>
<feature type="region of interest" description="Disordered" evidence="4">
    <location>
        <begin position="148"/>
        <end position="171"/>
    </location>
</feature>
<feature type="region of interest" description="Disordered" evidence="4">
    <location>
        <begin position="224"/>
        <end position="249"/>
    </location>
</feature>
<feature type="compositionally biased region" description="Polar residues" evidence="4">
    <location>
        <begin position="224"/>
        <end position="234"/>
    </location>
</feature>
<feature type="modified residue" description="N-acetylmethionine" evidence="2">
    <location>
        <position position="1"/>
    </location>
</feature>
<feature type="modified residue" description="Phosphoserine" evidence="2">
    <location>
        <position position="147"/>
    </location>
</feature>
<feature type="modified residue" description="Phosphothreonine" evidence="2">
    <location>
        <position position="172"/>
    </location>
</feature>
<feature type="modified residue" description="Phosphoserine" evidence="2">
    <location>
        <position position="175"/>
    </location>
</feature>
<feature type="sequence conflict" description="In Ref. 3; AAH66223." evidence="5" ref="3">
    <original>I</original>
    <variation>T</variation>
    <location>
        <position position="28"/>
    </location>
</feature>
<feature type="sequence conflict" description="In Ref. 1; BAE22420." evidence="5" ref="1">
    <original>A</original>
    <variation>T</variation>
    <location>
        <position position="193"/>
    </location>
</feature>
<keyword id="KW-0007">Acetylation</keyword>
<keyword id="KW-0539">Nucleus</keyword>
<keyword id="KW-0597">Phosphoprotein</keyword>
<keyword id="KW-1185">Reference proteome</keyword>
<keyword id="KW-0804">Transcription</keyword>
<keyword id="KW-0805">Transcription regulation</keyword>
<organism>
    <name type="scientific">Mus musculus</name>
    <name type="common">Mouse</name>
    <dbReference type="NCBI Taxonomy" id="10090"/>
    <lineage>
        <taxon>Eukaryota</taxon>
        <taxon>Metazoa</taxon>
        <taxon>Chordata</taxon>
        <taxon>Craniata</taxon>
        <taxon>Vertebrata</taxon>
        <taxon>Euteleostomi</taxon>
        <taxon>Mammalia</taxon>
        <taxon>Eutheria</taxon>
        <taxon>Euarchontoglires</taxon>
        <taxon>Glires</taxon>
        <taxon>Rodentia</taxon>
        <taxon>Myomorpha</taxon>
        <taxon>Muroidea</taxon>
        <taxon>Muridae</taxon>
        <taxon>Murinae</taxon>
        <taxon>Mus</taxon>
        <taxon>Mus</taxon>
    </lineage>
</organism>